<organism>
    <name type="scientific">Photobacterium profundum (strain SS9)</name>
    <dbReference type="NCBI Taxonomy" id="298386"/>
    <lineage>
        <taxon>Bacteria</taxon>
        <taxon>Pseudomonadati</taxon>
        <taxon>Pseudomonadota</taxon>
        <taxon>Gammaproteobacteria</taxon>
        <taxon>Vibrionales</taxon>
        <taxon>Vibrionaceae</taxon>
        <taxon>Photobacterium</taxon>
    </lineage>
</organism>
<evidence type="ECO:0000255" key="1">
    <source>
        <dbReference type="HAMAP-Rule" id="MF_01380"/>
    </source>
</evidence>
<reference key="1">
    <citation type="journal article" date="2005" name="Science">
        <title>Life at depth: Photobacterium profundum genome sequence and expression analysis.</title>
        <authorList>
            <person name="Vezzi A."/>
            <person name="Campanaro S."/>
            <person name="D'Angelo M."/>
            <person name="Simonato F."/>
            <person name="Vitulo N."/>
            <person name="Lauro F.M."/>
            <person name="Cestaro A."/>
            <person name="Malacrida G."/>
            <person name="Simionati B."/>
            <person name="Cannata N."/>
            <person name="Romualdi C."/>
            <person name="Bartlett D.H."/>
            <person name="Valle G."/>
        </authorList>
    </citation>
    <scope>NUCLEOTIDE SEQUENCE [LARGE SCALE GENOMIC DNA]</scope>
    <source>
        <strain>ATCC BAA-1253 / SS9</strain>
    </source>
</reference>
<proteinExistence type="inferred from homology"/>
<protein>
    <recommendedName>
        <fullName evidence="1">Iron-sulfur cluster insertion protein ErpA</fullName>
    </recommendedName>
</protein>
<dbReference type="EMBL" id="CR378664">
    <property type="protein sequence ID" value="CAG18954.1"/>
    <property type="molecule type" value="Genomic_DNA"/>
</dbReference>
<dbReference type="RefSeq" id="WP_011217307.1">
    <property type="nucleotide sequence ID" value="NC_006370.1"/>
</dbReference>
<dbReference type="SMR" id="Q6LUS1"/>
<dbReference type="STRING" id="298386.PBPRA0531"/>
<dbReference type="KEGG" id="ppr:PBPRA0531"/>
<dbReference type="eggNOG" id="COG0316">
    <property type="taxonomic scope" value="Bacteria"/>
</dbReference>
<dbReference type="HOGENOM" id="CLU_069054_5_3_6"/>
<dbReference type="Proteomes" id="UP000000593">
    <property type="component" value="Chromosome 1"/>
</dbReference>
<dbReference type="GO" id="GO:0005829">
    <property type="term" value="C:cytosol"/>
    <property type="evidence" value="ECO:0007669"/>
    <property type="project" value="TreeGrafter"/>
</dbReference>
<dbReference type="GO" id="GO:0051537">
    <property type="term" value="F:2 iron, 2 sulfur cluster binding"/>
    <property type="evidence" value="ECO:0007669"/>
    <property type="project" value="UniProtKB-ARBA"/>
</dbReference>
<dbReference type="GO" id="GO:0051539">
    <property type="term" value="F:4 iron, 4 sulfur cluster binding"/>
    <property type="evidence" value="ECO:0007669"/>
    <property type="project" value="TreeGrafter"/>
</dbReference>
<dbReference type="GO" id="GO:0005506">
    <property type="term" value="F:iron ion binding"/>
    <property type="evidence" value="ECO:0007669"/>
    <property type="project" value="UniProtKB-UniRule"/>
</dbReference>
<dbReference type="GO" id="GO:0016226">
    <property type="term" value="P:iron-sulfur cluster assembly"/>
    <property type="evidence" value="ECO:0007669"/>
    <property type="project" value="UniProtKB-UniRule"/>
</dbReference>
<dbReference type="FunFam" id="2.60.300.12:FF:000002">
    <property type="entry name" value="Iron-sulfur cluster insertion protein ErpA"/>
    <property type="match status" value="1"/>
</dbReference>
<dbReference type="Gene3D" id="2.60.300.12">
    <property type="entry name" value="HesB-like domain"/>
    <property type="match status" value="1"/>
</dbReference>
<dbReference type="HAMAP" id="MF_01380">
    <property type="entry name" value="Fe_S_insert_ErpA"/>
    <property type="match status" value="1"/>
</dbReference>
<dbReference type="InterPro" id="IPR000361">
    <property type="entry name" value="FeS_biogenesis"/>
</dbReference>
<dbReference type="InterPro" id="IPR016092">
    <property type="entry name" value="FeS_cluster_insertion"/>
</dbReference>
<dbReference type="InterPro" id="IPR017870">
    <property type="entry name" value="FeS_cluster_insertion_CS"/>
</dbReference>
<dbReference type="InterPro" id="IPR023063">
    <property type="entry name" value="FeS_cluster_insertion_RrpA"/>
</dbReference>
<dbReference type="InterPro" id="IPR035903">
    <property type="entry name" value="HesB-like_dom_sf"/>
</dbReference>
<dbReference type="NCBIfam" id="TIGR00049">
    <property type="entry name" value="iron-sulfur cluster assembly accessory protein"/>
    <property type="match status" value="1"/>
</dbReference>
<dbReference type="NCBIfam" id="NF010147">
    <property type="entry name" value="PRK13623.1"/>
    <property type="match status" value="1"/>
</dbReference>
<dbReference type="PANTHER" id="PTHR43011">
    <property type="entry name" value="IRON-SULFUR CLUSTER ASSEMBLY 2 HOMOLOG, MITOCHONDRIAL"/>
    <property type="match status" value="1"/>
</dbReference>
<dbReference type="PANTHER" id="PTHR43011:SF1">
    <property type="entry name" value="IRON-SULFUR CLUSTER ASSEMBLY 2 HOMOLOG, MITOCHONDRIAL"/>
    <property type="match status" value="1"/>
</dbReference>
<dbReference type="Pfam" id="PF01521">
    <property type="entry name" value="Fe-S_biosyn"/>
    <property type="match status" value="1"/>
</dbReference>
<dbReference type="SUPFAM" id="SSF89360">
    <property type="entry name" value="HesB-like domain"/>
    <property type="match status" value="1"/>
</dbReference>
<dbReference type="PROSITE" id="PS01152">
    <property type="entry name" value="HESB"/>
    <property type="match status" value="1"/>
</dbReference>
<comment type="function">
    <text evidence="1">Required for insertion of 4Fe-4S clusters for at least IspG.</text>
</comment>
<comment type="cofactor">
    <cofactor evidence="1">
        <name>iron-sulfur cluster</name>
        <dbReference type="ChEBI" id="CHEBI:30408"/>
    </cofactor>
    <text evidence="1">Binds 1 iron-sulfur cluster per subunit.</text>
</comment>
<comment type="subunit">
    <text evidence="1">Homodimer.</text>
</comment>
<comment type="similarity">
    <text evidence="1">Belongs to the HesB/IscA family.</text>
</comment>
<keyword id="KW-0408">Iron</keyword>
<keyword id="KW-0411">Iron-sulfur</keyword>
<keyword id="KW-0479">Metal-binding</keyword>
<keyword id="KW-1185">Reference proteome</keyword>
<feature type="chain" id="PRO_0000311516" description="Iron-sulfur cluster insertion protein ErpA">
    <location>
        <begin position="1"/>
        <end position="113"/>
    </location>
</feature>
<feature type="binding site" evidence="1">
    <location>
        <position position="41"/>
    </location>
    <ligand>
        <name>iron-sulfur cluster</name>
        <dbReference type="ChEBI" id="CHEBI:30408"/>
    </ligand>
</feature>
<feature type="binding site" evidence="1">
    <location>
        <position position="105"/>
    </location>
    <ligand>
        <name>iron-sulfur cluster</name>
        <dbReference type="ChEBI" id="CHEBI:30408"/>
    </ligand>
</feature>
<feature type="binding site" evidence="1">
    <location>
        <position position="107"/>
    </location>
    <ligand>
        <name>iron-sulfur cluster</name>
        <dbReference type="ChEBI" id="CHEBI:30408"/>
    </ligand>
</feature>
<accession>Q6LUS1</accession>
<sequence>MSDANVPLSFSDVAANKVKTLIAEEENPELKLRVYITGGGCSGFQYGFTFDEKVNDGDMTIENSGVTLVVDPMSLQYLVGGIVDYTEGLEGSRFFVNNPNATTTCGCGASFSV</sequence>
<name>ERPA_PHOPR</name>
<gene>
    <name evidence="1" type="primary">erpA</name>
    <name type="ordered locus">PBPRA0531</name>
</gene>